<organism>
    <name type="scientific">Xenopus laevis</name>
    <name type="common">African clawed frog</name>
    <dbReference type="NCBI Taxonomy" id="8355"/>
    <lineage>
        <taxon>Eukaryota</taxon>
        <taxon>Metazoa</taxon>
        <taxon>Chordata</taxon>
        <taxon>Craniata</taxon>
        <taxon>Vertebrata</taxon>
        <taxon>Euteleostomi</taxon>
        <taxon>Amphibia</taxon>
        <taxon>Batrachia</taxon>
        <taxon>Anura</taxon>
        <taxon>Pipoidea</taxon>
        <taxon>Pipidae</taxon>
        <taxon>Xenopodinae</taxon>
        <taxon>Xenopus</taxon>
        <taxon>Xenopus</taxon>
    </lineage>
</organism>
<accession>P17507</accession>
<accession>Q68FJ2</accession>
<protein>
    <recommendedName>
        <fullName>Elongation factor 1-alpha, oocyte form</fullName>
        <shortName>EF-1-alpha-O</shortName>
        <shortName>EF-1AO</shortName>
    </recommendedName>
    <alternativeName>
        <fullName>42S p48</fullName>
    </alternativeName>
</protein>
<sequence length="461" mass="50123">MGKEKIHINIVVIGHVDSGKSTTTGHLIYKCGGIDKRTIEKFEKEAAEMGKGSFKYAWVLDKLKAERERGITIDISLWKFETGKFYITIIDAPGHRDFIKNMITGTSQADCAVLIVAGGVGEFEAGISKNGQTREHALLAFTLGVKQLIIGVNKMDSTEPPFSQKRFEEITKEVSAYIKKIGYNPATVPFVPISGWHGDNMLEASTNMPWFKGWKIERKEGNASGVTLLEALDCIIPPQRPTAKPLRLPLQDVYKIGGIGTVPVGRVETGVLKPGMIVTFAPSNVTTEVKSVEMHHEALQEALPGDNVGFNVKNISVKDIRRGNVAGDSKNDPPMQAGSFTAQVIILNHPGQISAGYAPVLDCHTAHIACKFAELKQKIDRRSGKKLEDDPKFLKSGDAAIVEMIPGKPMCVESFSDYPPLGRFAVRDMRQTVAVGVIKGVDKKAASSGKVTKSAVKAGKK</sequence>
<name>EF1A2_XENLA</name>
<gene>
    <name type="primary">eef1ao</name>
</gene>
<dbReference type="EMBL" id="X52976">
    <property type="protein sequence ID" value="CAA37168.1"/>
    <property type="molecule type" value="mRNA"/>
</dbReference>
<dbReference type="EMBL" id="M67485">
    <property type="protein sequence ID" value="AAA49702.1"/>
    <property type="molecule type" value="Genomic_DNA"/>
</dbReference>
<dbReference type="EMBL" id="M67481">
    <property type="protein sequence ID" value="AAA49702.1"/>
    <property type="status" value="JOINED"/>
    <property type="molecule type" value="Genomic_DNA"/>
</dbReference>
<dbReference type="EMBL" id="M67483">
    <property type="protein sequence ID" value="AAA49702.1"/>
    <property type="status" value="JOINED"/>
    <property type="molecule type" value="Genomic_DNA"/>
</dbReference>
<dbReference type="EMBL" id="M67484">
    <property type="protein sequence ID" value="AAA49702.1"/>
    <property type="status" value="JOINED"/>
    <property type="molecule type" value="Genomic_DNA"/>
</dbReference>
<dbReference type="EMBL" id="M75873">
    <property type="protein sequence ID" value="AAA49701.1"/>
    <property type="molecule type" value="Genomic_DNA"/>
</dbReference>
<dbReference type="EMBL" id="BC079786">
    <property type="protein sequence ID" value="AAH79786.1"/>
    <property type="molecule type" value="mRNA"/>
</dbReference>
<dbReference type="EMBL" id="X56698">
    <property type="protein sequence ID" value="CAA40028.1"/>
    <property type="molecule type" value="mRNA"/>
</dbReference>
<dbReference type="PIR" id="JH0530">
    <property type="entry name" value="JH0530"/>
</dbReference>
<dbReference type="RefSeq" id="NP_001081521.1">
    <property type="nucleotide sequence ID" value="NM_001088052.1"/>
</dbReference>
<dbReference type="SMR" id="P17507"/>
<dbReference type="BioGRID" id="99228">
    <property type="interactions" value="4"/>
</dbReference>
<dbReference type="IntAct" id="P17507">
    <property type="interactions" value="2"/>
</dbReference>
<dbReference type="DNASU" id="397890"/>
<dbReference type="GeneID" id="397890"/>
<dbReference type="KEGG" id="xla:397890"/>
<dbReference type="AGR" id="Xenbase:XB-GENE-1218993"/>
<dbReference type="CTD" id="397890"/>
<dbReference type="Xenbase" id="XB-GENE-1218993">
    <property type="gene designation" value="eef1a1o.L"/>
</dbReference>
<dbReference type="OMA" id="ECISFIA"/>
<dbReference type="OrthoDB" id="342024at2759"/>
<dbReference type="Proteomes" id="UP000186698">
    <property type="component" value="Chromosome 2L"/>
</dbReference>
<dbReference type="Bgee" id="397890">
    <property type="expression patterns" value="Expressed in ovary and 16 other cell types or tissues"/>
</dbReference>
<dbReference type="GO" id="GO:0005737">
    <property type="term" value="C:cytoplasm"/>
    <property type="evidence" value="ECO:0007669"/>
    <property type="project" value="UniProtKB-SubCell"/>
</dbReference>
<dbReference type="GO" id="GO:0005525">
    <property type="term" value="F:GTP binding"/>
    <property type="evidence" value="ECO:0007669"/>
    <property type="project" value="UniProtKB-KW"/>
</dbReference>
<dbReference type="GO" id="GO:0003924">
    <property type="term" value="F:GTPase activity"/>
    <property type="evidence" value="ECO:0000318"/>
    <property type="project" value="GO_Central"/>
</dbReference>
<dbReference type="GO" id="GO:0003746">
    <property type="term" value="F:translation elongation factor activity"/>
    <property type="evidence" value="ECO:0000318"/>
    <property type="project" value="GO_Central"/>
</dbReference>
<dbReference type="GO" id="GO:0006412">
    <property type="term" value="P:translation"/>
    <property type="evidence" value="ECO:0000318"/>
    <property type="project" value="GO_Central"/>
</dbReference>
<dbReference type="GO" id="GO:0006414">
    <property type="term" value="P:translational elongation"/>
    <property type="evidence" value="ECO:0000318"/>
    <property type="project" value="GO_Central"/>
</dbReference>
<dbReference type="CDD" id="cd01883">
    <property type="entry name" value="EF1_alpha"/>
    <property type="match status" value="1"/>
</dbReference>
<dbReference type="CDD" id="cd03693">
    <property type="entry name" value="EF1_alpha_II"/>
    <property type="match status" value="1"/>
</dbReference>
<dbReference type="CDD" id="cd03705">
    <property type="entry name" value="EF1_alpha_III"/>
    <property type="match status" value="1"/>
</dbReference>
<dbReference type="FunFam" id="2.40.30.10:FF:000005">
    <property type="entry name" value="Elongation factor 1-alpha"/>
    <property type="match status" value="1"/>
</dbReference>
<dbReference type="FunFam" id="3.40.50.300:FF:000090">
    <property type="entry name" value="Elongation factor 1-alpha"/>
    <property type="match status" value="1"/>
</dbReference>
<dbReference type="FunFam" id="2.40.30.10:FF:000168">
    <property type="entry name" value="Elongation factor 1-alpha 2"/>
    <property type="match status" value="1"/>
</dbReference>
<dbReference type="Gene3D" id="3.40.50.300">
    <property type="entry name" value="P-loop containing nucleotide triphosphate hydrolases"/>
    <property type="match status" value="1"/>
</dbReference>
<dbReference type="Gene3D" id="2.40.30.10">
    <property type="entry name" value="Translation factors"/>
    <property type="match status" value="2"/>
</dbReference>
<dbReference type="HAMAP" id="MF_00118_A">
    <property type="entry name" value="EF_Tu_A"/>
    <property type="match status" value="1"/>
</dbReference>
<dbReference type="InterPro" id="IPR004161">
    <property type="entry name" value="EFTu-like_2"/>
</dbReference>
<dbReference type="InterPro" id="IPR031157">
    <property type="entry name" value="G_TR_CS"/>
</dbReference>
<dbReference type="InterPro" id="IPR054696">
    <property type="entry name" value="GTP-eEF1A_C"/>
</dbReference>
<dbReference type="InterPro" id="IPR027417">
    <property type="entry name" value="P-loop_NTPase"/>
</dbReference>
<dbReference type="InterPro" id="IPR000795">
    <property type="entry name" value="T_Tr_GTP-bd_dom"/>
</dbReference>
<dbReference type="InterPro" id="IPR050100">
    <property type="entry name" value="TRAFAC_GTPase_members"/>
</dbReference>
<dbReference type="InterPro" id="IPR009000">
    <property type="entry name" value="Transl_B-barrel_sf"/>
</dbReference>
<dbReference type="InterPro" id="IPR009001">
    <property type="entry name" value="Transl_elong_EF1A/Init_IF2_C"/>
</dbReference>
<dbReference type="InterPro" id="IPR004539">
    <property type="entry name" value="Transl_elong_EF1A_euk/arc"/>
</dbReference>
<dbReference type="NCBIfam" id="TIGR00483">
    <property type="entry name" value="EF-1_alpha"/>
    <property type="match status" value="1"/>
</dbReference>
<dbReference type="NCBIfam" id="NF008969">
    <property type="entry name" value="PRK12317.1"/>
    <property type="match status" value="1"/>
</dbReference>
<dbReference type="PANTHER" id="PTHR23115">
    <property type="entry name" value="TRANSLATION FACTOR"/>
    <property type="match status" value="1"/>
</dbReference>
<dbReference type="Pfam" id="PF22594">
    <property type="entry name" value="GTP-eEF1A_C"/>
    <property type="match status" value="1"/>
</dbReference>
<dbReference type="Pfam" id="PF00009">
    <property type="entry name" value="GTP_EFTU"/>
    <property type="match status" value="1"/>
</dbReference>
<dbReference type="Pfam" id="PF03144">
    <property type="entry name" value="GTP_EFTU_D2"/>
    <property type="match status" value="1"/>
</dbReference>
<dbReference type="PRINTS" id="PR00315">
    <property type="entry name" value="ELONGATNFCT"/>
</dbReference>
<dbReference type="SUPFAM" id="SSF50465">
    <property type="entry name" value="EF-Tu/eEF-1alpha/eIF2-gamma C-terminal domain"/>
    <property type="match status" value="1"/>
</dbReference>
<dbReference type="SUPFAM" id="SSF52540">
    <property type="entry name" value="P-loop containing nucleoside triphosphate hydrolases"/>
    <property type="match status" value="1"/>
</dbReference>
<dbReference type="SUPFAM" id="SSF50447">
    <property type="entry name" value="Translation proteins"/>
    <property type="match status" value="1"/>
</dbReference>
<dbReference type="PROSITE" id="PS00301">
    <property type="entry name" value="G_TR_1"/>
    <property type="match status" value="1"/>
</dbReference>
<dbReference type="PROSITE" id="PS51722">
    <property type="entry name" value="G_TR_2"/>
    <property type="match status" value="1"/>
</dbReference>
<proteinExistence type="evidence at protein level"/>
<comment type="function">
    <text>This protein promotes the GTP-dependent binding of aminoacyl-tRNA to the A-site of ribosomes during protein biosynthesis.</text>
</comment>
<comment type="subcellular location">
    <subcellularLocation>
        <location>Cytoplasm</location>
    </subcellularLocation>
</comment>
<comment type="tissue specificity">
    <text>Oocyte.</text>
</comment>
<comment type="developmental stage">
    <text>3 EF-1-alpha are expressed under different developmental control in Xenopus laevis.</text>
</comment>
<comment type="similarity">
    <text evidence="3">Belongs to the TRAFAC class translation factor GTPase superfamily. Classic translation factor GTPase family. EF-Tu/EF-1A subfamily.</text>
</comment>
<keyword id="KW-0963">Cytoplasm</keyword>
<keyword id="KW-0903">Direct protein sequencing</keyword>
<keyword id="KW-0251">Elongation factor</keyword>
<keyword id="KW-0342">GTP-binding</keyword>
<keyword id="KW-0488">Methylation</keyword>
<keyword id="KW-0547">Nucleotide-binding</keyword>
<keyword id="KW-0597">Phosphoprotein</keyword>
<keyword id="KW-0648">Protein biosynthesis</keyword>
<keyword id="KW-1185">Reference proteome</keyword>
<reference key="1">
    <citation type="journal article" date="1990" name="Nucleic Acids Res.">
        <title>Three genes under different developmental control encode elongation factor 1-alpha in Xenopus laevis.</title>
        <authorList>
            <person name="Dje M.K."/>
            <person name="Mazabraud A."/>
            <person name="Viel A."/>
            <person name="le Maire M."/>
            <person name="Denis H."/>
            <person name="Crawford E.T."/>
            <person name="Brown D.D."/>
        </authorList>
    </citation>
    <scope>NUCLEOTIDE SEQUENCE [MRNA]</scope>
    <source>
        <tissue>Oocyte</tissue>
    </source>
</reference>
<reference key="2">
    <citation type="journal article" date="1991" name="Gene">
        <title>Isolation and characterization of the gene encoding EF-1 alpha O, an elongation factor 1-alpha expressed during early development of Xenopus laevis.</title>
        <authorList>
            <person name="Frydenberg J."/>
            <person name="Poulsen K."/>
            <person name="Petersen A.K.B."/>
            <person name="Lund A."/>
            <person name="Olesen O.F."/>
        </authorList>
    </citation>
    <scope>NUCLEOTIDE SEQUENCE [GENOMIC DNA]</scope>
    <source>
        <tissue>Oocyte</tissue>
    </source>
</reference>
<reference key="3">
    <citation type="submission" date="2004-08" db="EMBL/GenBank/DDBJ databases">
        <authorList>
            <consortium name="NIH - Xenopus Gene Collection (XGC) project"/>
        </authorList>
    </citation>
    <scope>NUCLEOTIDE SEQUENCE [LARGE SCALE MRNA]</scope>
    <source>
        <tissue>Kidney</tissue>
    </source>
</reference>
<reference key="4">
    <citation type="journal article" date="1991" name="J. Cell Biol.">
        <title>42Sp48 in previtellogenic Xenopus oocytes is structurally homologous to EF-1 alpha and may be a stage-specific elongation factor.</title>
        <authorList>
            <person name="Coppard N.J."/>
            <person name="Poulsen K."/>
            <person name="Madsen H.O."/>
            <person name="Frydenberg J."/>
            <person name="Clark B.F.C."/>
        </authorList>
    </citation>
    <scope>NUCLEOTIDE SEQUENCE [MRNA] OF 139-461</scope>
</reference>
<reference key="5">
    <citation type="journal article" date="1991" name="J. Cell Biol.">
        <title>Two forms of elongation factor 1 alpha (EF-1 alpha O and 42Sp50), present in oocytes, but absent in somatic cells of Xenopus laevis.</title>
        <authorList>
            <person name="Deschamps S."/>
            <person name="Morales J."/>
            <person name="Mazabraud A."/>
            <person name="le Maire M."/>
            <person name="Denis H."/>
            <person name="Brown D.D."/>
        </authorList>
    </citation>
    <scope>PARTIAL PROTEIN SEQUENCE</scope>
</reference>
<feature type="initiator methionine" description="Removed" evidence="2">
    <location>
        <position position="1"/>
    </location>
</feature>
<feature type="chain" id="PRO_0000090900" description="Elongation factor 1-alpha, oocyte form">
    <location>
        <begin position="2"/>
        <end position="461"/>
    </location>
</feature>
<feature type="domain" description="tr-type G">
    <location>
        <begin position="5"/>
        <end position="242"/>
    </location>
</feature>
<feature type="region of interest" description="G1" evidence="1">
    <location>
        <begin position="14"/>
        <end position="21"/>
    </location>
</feature>
<feature type="region of interest" description="G2" evidence="1">
    <location>
        <begin position="70"/>
        <end position="74"/>
    </location>
</feature>
<feature type="region of interest" description="G3" evidence="1">
    <location>
        <begin position="91"/>
        <end position="94"/>
    </location>
</feature>
<feature type="region of interest" description="G4" evidence="1">
    <location>
        <begin position="153"/>
        <end position="156"/>
    </location>
</feature>
<feature type="region of interest" description="G5" evidence="1">
    <location>
        <begin position="194"/>
        <end position="196"/>
    </location>
</feature>
<feature type="binding site" evidence="1">
    <location>
        <begin position="14"/>
        <end position="21"/>
    </location>
    <ligand>
        <name>GTP</name>
        <dbReference type="ChEBI" id="CHEBI:37565"/>
    </ligand>
</feature>
<feature type="binding site" evidence="1">
    <location>
        <begin position="91"/>
        <end position="95"/>
    </location>
    <ligand>
        <name>GTP</name>
        <dbReference type="ChEBI" id="CHEBI:37565"/>
    </ligand>
</feature>
<feature type="binding site" evidence="1">
    <location>
        <begin position="153"/>
        <end position="156"/>
    </location>
    <ligand>
        <name>GTP</name>
        <dbReference type="ChEBI" id="CHEBI:37565"/>
    </ligand>
</feature>
<feature type="modified residue" description="N,N,N-trimethylglycine" evidence="2">
    <location>
        <position position="2"/>
    </location>
</feature>
<feature type="modified residue" description="5-glutamyl glycerylphosphorylethanolamine" evidence="1">
    <location>
        <position position="301"/>
    </location>
</feature>
<feature type="modified residue" description="5-glutamyl glycerylphosphorylethanolamine" evidence="1">
    <location>
        <position position="374"/>
    </location>
</feature>
<evidence type="ECO:0000250" key="1"/>
<evidence type="ECO:0000250" key="2">
    <source>
        <dbReference type="UniProtKB" id="P68104"/>
    </source>
</evidence>
<evidence type="ECO:0000305" key="3"/>